<protein>
    <recommendedName>
        <fullName evidence="1">Ribosomal protein L11 methyltransferase</fullName>
        <shortName evidence="1">L11 Mtase</shortName>
        <ecNumber evidence="1">2.1.1.-</ecNumber>
    </recommendedName>
</protein>
<proteinExistence type="inferred from homology"/>
<sequence length="293" mass="32515">MAWIQLRIHTHRDNADLLGDLLMDQGSLSITYEDGQDEPIFEPKLGETPLWQDTVMIALFDAGTDLAPTIEFLESMPFLGKGFNHKIEQVEDKDWIREWMDSFHPIQFGSRLWICPSWREIPDPTAVNVILDPGLAFGTGTHPTTALCLEWLDSLDLSNQEVIDFGCGSGILAIAAIKLGAKKVTGVDIDYQAIDASKANAERNDVVDKLALYLPEDQPANLQADVLVANILAGPLKELAPLIAEKVKIGGKLALSGLLQEQAQEVSDFYSQWFIMDPVSNKEDWSRLTGIRK</sequence>
<reference key="1">
    <citation type="submission" date="2006-08" db="EMBL/GenBank/DDBJ databases">
        <title>Complete sequence of Shewanella frigidimarina NCIMB 400.</title>
        <authorList>
            <consortium name="US DOE Joint Genome Institute"/>
            <person name="Copeland A."/>
            <person name="Lucas S."/>
            <person name="Lapidus A."/>
            <person name="Barry K."/>
            <person name="Detter J.C."/>
            <person name="Glavina del Rio T."/>
            <person name="Hammon N."/>
            <person name="Israni S."/>
            <person name="Dalin E."/>
            <person name="Tice H."/>
            <person name="Pitluck S."/>
            <person name="Fredrickson J.K."/>
            <person name="Kolker E."/>
            <person name="McCuel L.A."/>
            <person name="DiChristina T."/>
            <person name="Nealson K.H."/>
            <person name="Newman D."/>
            <person name="Tiedje J.M."/>
            <person name="Zhou J."/>
            <person name="Romine M.F."/>
            <person name="Culley D.E."/>
            <person name="Serres M."/>
            <person name="Chertkov O."/>
            <person name="Brettin T."/>
            <person name="Bruce D."/>
            <person name="Han C."/>
            <person name="Tapia R."/>
            <person name="Gilna P."/>
            <person name="Schmutz J."/>
            <person name="Larimer F."/>
            <person name="Land M."/>
            <person name="Hauser L."/>
            <person name="Kyrpides N."/>
            <person name="Mikhailova N."/>
            <person name="Richardson P."/>
        </authorList>
    </citation>
    <scope>NUCLEOTIDE SEQUENCE [LARGE SCALE GENOMIC DNA]</scope>
    <source>
        <strain>NCIMB 400</strain>
    </source>
</reference>
<keyword id="KW-0963">Cytoplasm</keyword>
<keyword id="KW-0489">Methyltransferase</keyword>
<keyword id="KW-1185">Reference proteome</keyword>
<keyword id="KW-0949">S-adenosyl-L-methionine</keyword>
<keyword id="KW-0808">Transferase</keyword>
<feature type="chain" id="PRO_1000046087" description="Ribosomal protein L11 methyltransferase">
    <location>
        <begin position="1"/>
        <end position="293"/>
    </location>
</feature>
<feature type="binding site" evidence="1">
    <location>
        <position position="145"/>
    </location>
    <ligand>
        <name>S-adenosyl-L-methionine</name>
        <dbReference type="ChEBI" id="CHEBI:59789"/>
    </ligand>
</feature>
<feature type="binding site" evidence="1">
    <location>
        <position position="166"/>
    </location>
    <ligand>
        <name>S-adenosyl-L-methionine</name>
        <dbReference type="ChEBI" id="CHEBI:59789"/>
    </ligand>
</feature>
<feature type="binding site" evidence="1">
    <location>
        <position position="188"/>
    </location>
    <ligand>
        <name>S-adenosyl-L-methionine</name>
        <dbReference type="ChEBI" id="CHEBI:59789"/>
    </ligand>
</feature>
<feature type="binding site" evidence="1">
    <location>
        <position position="230"/>
    </location>
    <ligand>
        <name>S-adenosyl-L-methionine</name>
        <dbReference type="ChEBI" id="CHEBI:59789"/>
    </ligand>
</feature>
<gene>
    <name evidence="1" type="primary">prmA</name>
    <name type="ordered locus">Sfri_0455</name>
</gene>
<comment type="function">
    <text evidence="1">Methylates ribosomal protein L11.</text>
</comment>
<comment type="catalytic activity">
    <reaction evidence="1">
        <text>L-lysyl-[protein] + 3 S-adenosyl-L-methionine = N(6),N(6),N(6)-trimethyl-L-lysyl-[protein] + 3 S-adenosyl-L-homocysteine + 3 H(+)</text>
        <dbReference type="Rhea" id="RHEA:54192"/>
        <dbReference type="Rhea" id="RHEA-COMP:9752"/>
        <dbReference type="Rhea" id="RHEA-COMP:13826"/>
        <dbReference type="ChEBI" id="CHEBI:15378"/>
        <dbReference type="ChEBI" id="CHEBI:29969"/>
        <dbReference type="ChEBI" id="CHEBI:57856"/>
        <dbReference type="ChEBI" id="CHEBI:59789"/>
        <dbReference type="ChEBI" id="CHEBI:61961"/>
    </reaction>
</comment>
<comment type="subcellular location">
    <subcellularLocation>
        <location evidence="1">Cytoplasm</location>
    </subcellularLocation>
</comment>
<comment type="similarity">
    <text evidence="1">Belongs to the methyltransferase superfamily. PrmA family.</text>
</comment>
<evidence type="ECO:0000255" key="1">
    <source>
        <dbReference type="HAMAP-Rule" id="MF_00735"/>
    </source>
</evidence>
<dbReference type="EC" id="2.1.1.-" evidence="1"/>
<dbReference type="EMBL" id="CP000447">
    <property type="protein sequence ID" value="ABI70317.1"/>
    <property type="molecule type" value="Genomic_DNA"/>
</dbReference>
<dbReference type="RefSeq" id="WP_011635944.1">
    <property type="nucleotide sequence ID" value="NC_008345.1"/>
</dbReference>
<dbReference type="SMR" id="Q088J8"/>
<dbReference type="STRING" id="318167.Sfri_0455"/>
<dbReference type="KEGG" id="sfr:Sfri_0455"/>
<dbReference type="eggNOG" id="COG2264">
    <property type="taxonomic scope" value="Bacteria"/>
</dbReference>
<dbReference type="HOGENOM" id="CLU_049382_4_1_6"/>
<dbReference type="OrthoDB" id="9785995at2"/>
<dbReference type="Proteomes" id="UP000000684">
    <property type="component" value="Chromosome"/>
</dbReference>
<dbReference type="GO" id="GO:0005829">
    <property type="term" value="C:cytosol"/>
    <property type="evidence" value="ECO:0007669"/>
    <property type="project" value="TreeGrafter"/>
</dbReference>
<dbReference type="GO" id="GO:0016279">
    <property type="term" value="F:protein-lysine N-methyltransferase activity"/>
    <property type="evidence" value="ECO:0007669"/>
    <property type="project" value="TreeGrafter"/>
</dbReference>
<dbReference type="GO" id="GO:0032259">
    <property type="term" value="P:methylation"/>
    <property type="evidence" value="ECO:0007669"/>
    <property type="project" value="UniProtKB-KW"/>
</dbReference>
<dbReference type="CDD" id="cd02440">
    <property type="entry name" value="AdoMet_MTases"/>
    <property type="match status" value="1"/>
</dbReference>
<dbReference type="Gene3D" id="3.40.50.150">
    <property type="entry name" value="Vaccinia Virus protein VP39"/>
    <property type="match status" value="1"/>
</dbReference>
<dbReference type="HAMAP" id="MF_00735">
    <property type="entry name" value="Methyltr_PrmA"/>
    <property type="match status" value="1"/>
</dbReference>
<dbReference type="InterPro" id="IPR050078">
    <property type="entry name" value="Ribosomal_L11_MeTrfase_PrmA"/>
</dbReference>
<dbReference type="InterPro" id="IPR004498">
    <property type="entry name" value="Ribosomal_PrmA_MeTrfase"/>
</dbReference>
<dbReference type="InterPro" id="IPR029063">
    <property type="entry name" value="SAM-dependent_MTases_sf"/>
</dbReference>
<dbReference type="NCBIfam" id="TIGR00406">
    <property type="entry name" value="prmA"/>
    <property type="match status" value="1"/>
</dbReference>
<dbReference type="PANTHER" id="PTHR43648">
    <property type="entry name" value="ELECTRON TRANSFER FLAVOPROTEIN BETA SUBUNIT LYSINE METHYLTRANSFERASE"/>
    <property type="match status" value="1"/>
</dbReference>
<dbReference type="PANTHER" id="PTHR43648:SF1">
    <property type="entry name" value="ELECTRON TRANSFER FLAVOPROTEIN BETA SUBUNIT LYSINE METHYLTRANSFERASE"/>
    <property type="match status" value="1"/>
</dbReference>
<dbReference type="Pfam" id="PF06325">
    <property type="entry name" value="PrmA"/>
    <property type="match status" value="1"/>
</dbReference>
<dbReference type="PIRSF" id="PIRSF000401">
    <property type="entry name" value="RPL11_MTase"/>
    <property type="match status" value="1"/>
</dbReference>
<dbReference type="SUPFAM" id="SSF53335">
    <property type="entry name" value="S-adenosyl-L-methionine-dependent methyltransferases"/>
    <property type="match status" value="1"/>
</dbReference>
<name>PRMA_SHEFN</name>
<accession>Q088J8</accession>
<organism>
    <name type="scientific">Shewanella frigidimarina (strain NCIMB 400)</name>
    <dbReference type="NCBI Taxonomy" id="318167"/>
    <lineage>
        <taxon>Bacteria</taxon>
        <taxon>Pseudomonadati</taxon>
        <taxon>Pseudomonadota</taxon>
        <taxon>Gammaproteobacteria</taxon>
        <taxon>Alteromonadales</taxon>
        <taxon>Shewanellaceae</taxon>
        <taxon>Shewanella</taxon>
    </lineage>
</organism>